<evidence type="ECO:0000250" key="1"/>
<evidence type="ECO:0000269" key="2">
    <source>
    </source>
</evidence>
<evidence type="ECO:0000269" key="3">
    <source>
    </source>
</evidence>
<evidence type="ECO:0000305" key="4"/>
<evidence type="ECO:0007829" key="5">
    <source>
        <dbReference type="PDB" id="3A2Q"/>
    </source>
</evidence>
<protein>
    <recommendedName>
        <fullName>6-aminohexanoate-cyclic-dimer hydrolase</fullName>
        <ecNumber>3.5.2.12</ecNumber>
    </recommendedName>
    <alternativeName>
        <fullName>Nylon oligomers-degrading enzyme EI</fullName>
    </alternativeName>
</protein>
<organism>
    <name type="scientific">Paenarthrobacter ureafaciens</name>
    <dbReference type="NCBI Taxonomy" id="37931"/>
    <lineage>
        <taxon>Bacteria</taxon>
        <taxon>Bacillati</taxon>
        <taxon>Actinomycetota</taxon>
        <taxon>Actinomycetes</taxon>
        <taxon>Micrococcales</taxon>
        <taxon>Micrococcaceae</taxon>
        <taxon>Paenarthrobacter</taxon>
    </lineage>
</organism>
<feature type="initiator methionine" description="Removed" evidence="2">
    <location>
        <position position="1"/>
    </location>
</feature>
<feature type="chain" id="PRO_0000105252" description="6-aminohexanoate-cyclic-dimer hydrolase">
    <location>
        <begin position="2"/>
        <end position="493"/>
    </location>
</feature>
<feature type="active site" description="Charge relay system" evidence="1">
    <location>
        <position position="72"/>
    </location>
</feature>
<feature type="active site" description="Charge relay system" evidence="1">
    <location>
        <position position="150"/>
    </location>
</feature>
<feature type="active site" description="Acyl-ester intermediate" evidence="1">
    <location>
        <position position="174"/>
    </location>
</feature>
<feature type="helix" evidence="5">
    <location>
        <begin position="10"/>
        <end position="19"/>
    </location>
</feature>
<feature type="strand" evidence="5">
    <location>
        <begin position="20"/>
        <end position="22"/>
    </location>
</feature>
<feature type="helix" evidence="5">
    <location>
        <begin position="24"/>
        <end position="42"/>
    </location>
</feature>
<feature type="strand" evidence="5">
    <location>
        <begin position="45"/>
        <end position="48"/>
    </location>
</feature>
<feature type="helix" evidence="5">
    <location>
        <begin position="50"/>
        <end position="59"/>
    </location>
</feature>
<feature type="turn" evidence="5">
    <location>
        <begin position="63"/>
        <end position="66"/>
    </location>
</feature>
<feature type="strand" evidence="5">
    <location>
        <begin position="68"/>
        <end position="76"/>
    </location>
</feature>
<feature type="helix" evidence="5">
    <location>
        <begin position="88"/>
        <end position="93"/>
    </location>
</feature>
<feature type="helix" evidence="5">
    <location>
        <begin position="102"/>
        <end position="110"/>
    </location>
</feature>
<feature type="strand" evidence="5">
    <location>
        <begin position="113"/>
        <end position="118"/>
    </location>
</feature>
<feature type="helix" evidence="5">
    <location>
        <begin position="122"/>
        <end position="124"/>
    </location>
</feature>
<feature type="strand" evidence="5">
    <location>
        <begin position="126"/>
        <end position="128"/>
    </location>
</feature>
<feature type="turn" evidence="5">
    <location>
        <begin position="132"/>
        <end position="134"/>
    </location>
</feature>
<feature type="strand" evidence="5">
    <location>
        <begin position="149"/>
        <end position="151"/>
    </location>
</feature>
<feature type="helix" evidence="5">
    <location>
        <begin position="152"/>
        <end position="159"/>
    </location>
</feature>
<feature type="strand" evidence="5">
    <location>
        <begin position="164"/>
        <end position="173"/>
    </location>
</feature>
<feature type="helix" evidence="5">
    <location>
        <begin position="176"/>
        <end position="182"/>
    </location>
</feature>
<feature type="strand" evidence="5">
    <location>
        <begin position="184"/>
        <end position="188"/>
    </location>
</feature>
<feature type="helix" evidence="5">
    <location>
        <begin position="202"/>
        <end position="207"/>
    </location>
</feature>
<feature type="strand" evidence="5">
    <location>
        <begin position="211"/>
        <end position="218"/>
    </location>
</feature>
<feature type="helix" evidence="5">
    <location>
        <begin position="219"/>
        <end position="229"/>
    </location>
</feature>
<feature type="helix" evidence="5">
    <location>
        <begin position="247"/>
        <end position="250"/>
    </location>
</feature>
<feature type="strand" evidence="5">
    <location>
        <begin position="259"/>
        <end position="262"/>
    </location>
</feature>
<feature type="helix" evidence="5">
    <location>
        <begin position="275"/>
        <end position="290"/>
    </location>
</feature>
<feature type="strand" evidence="5">
    <location>
        <begin position="294"/>
        <end position="297"/>
    </location>
</feature>
<feature type="helix" evidence="5">
    <location>
        <begin position="301"/>
        <end position="304"/>
    </location>
</feature>
<feature type="helix" evidence="5">
    <location>
        <begin position="308"/>
        <end position="331"/>
    </location>
</feature>
<feature type="turn" evidence="5">
    <location>
        <begin position="337"/>
        <end position="339"/>
    </location>
</feature>
<feature type="helix" evidence="5">
    <location>
        <begin position="342"/>
        <end position="352"/>
    </location>
</feature>
<feature type="helix" evidence="5">
    <location>
        <begin position="356"/>
        <end position="378"/>
    </location>
</feature>
<feature type="strand" evidence="5">
    <location>
        <begin position="383"/>
        <end position="388"/>
    </location>
</feature>
<feature type="turn" evidence="5">
    <location>
        <begin position="396"/>
        <end position="399"/>
    </location>
</feature>
<feature type="helix" evidence="5">
    <location>
        <begin position="412"/>
        <end position="414"/>
    </location>
</feature>
<feature type="helix" evidence="5">
    <location>
        <begin position="416"/>
        <end position="422"/>
    </location>
</feature>
<feature type="turn" evidence="5">
    <location>
        <begin position="423"/>
        <end position="426"/>
    </location>
</feature>
<feature type="helix" evidence="5">
    <location>
        <begin position="427"/>
        <end position="431"/>
    </location>
</feature>
<feature type="strand" evidence="5">
    <location>
        <begin position="435"/>
        <end position="442"/>
    </location>
</feature>
<feature type="strand" evidence="5">
    <location>
        <begin position="448"/>
        <end position="456"/>
    </location>
</feature>
<feature type="helix" evidence="5">
    <location>
        <begin position="460"/>
        <end position="473"/>
    </location>
</feature>
<feature type="helix" evidence="5">
    <location>
        <begin position="482"/>
        <end position="484"/>
    </location>
</feature>
<sequence>MSKVDLWQDATAQAELVRSGEISRTELLEATIAHVQAVNPEINAVIIPLFEKARRESELASGPFAGVPYLLKDLTVVSQGDINTSSIKGMKESGYRADHDAYFVQRMRAAGFVLLGKTNTPEMGNQVTTEPEAWGATRNPWNLGRSVGGSSGGSGAAVAAALSPVAHGNDAAGSVRIPASVCGVVGLKPTRGRISPGPLVTDSDNVAGAAHEGLFARSVRDIAALLDVVSGHRPGDTFCAPTASRPYAQGISENPGSLRVGVLTHNPVGDFALDPECAAAARGAAAALAALGHDVNDAYPEALGDRSFLKDYSTICDVAIAREIERNGELIGRPLTEDDVEWTSWEMVKRADQVTGRAFAACVDELRYYAGKVERWWEAGWDLLILPTVTRQTPEIGELMLAKGTDLEGRQSAFISGSLQMLAFTVPFNVSGQPAISLPIGMSSDGMPIGVQIVAAYGREDLLLQVAAQLEGALPWVARRPQLLNPSRKIPAA</sequence>
<comment type="function">
    <text evidence="3">Specifically catalyzes the hydrolysis of 6-aminohexanoic acid cyclic dimer (1,8-diazacyclotetradecane-2,9-dione) to form the linear dimer 6-aminohexanoyl-6-aminohexanoic acid. Is inactive on 6-aminohexanoic acid oligomers (degree of polymerization 2 to 6), various other cyclic amides, cyclic diamides, linear amides, oligopeptides, and casein. Allows the bacterium to grow on a medium containing 6-aminohexanoic acid cyclic dimer as the sole carbon and nitrogen sources.</text>
</comment>
<comment type="catalytic activity">
    <reaction evidence="3">
        <text>1,8-diazacyclotetradecane-2,9-dione + H2O = N-(6-aminohexanoyl)-6-aminohexanoate</text>
        <dbReference type="Rhea" id="RHEA:16225"/>
        <dbReference type="ChEBI" id="CHEBI:15377"/>
        <dbReference type="ChEBI" id="CHEBI:16968"/>
        <dbReference type="ChEBI" id="CHEBI:58798"/>
        <dbReference type="EC" id="3.5.2.12"/>
    </reaction>
</comment>
<comment type="activity regulation">
    <text evidence="3">Strongly inhibited by 1 uM diisopropylphosphofluoridate and 10 uM p-chloromercuribenzoate but scarcely inhibited by 100 mM EDTA in vitro.</text>
</comment>
<comment type="biophysicochemical properties">
    <kinetics>
        <KM evidence="3">6 mM for 1,8-diazacyclotetradecane-2,9-dione</KM>
    </kinetics>
    <phDependence>
        <text evidence="3">Optimum pH is 7.3. Is stable from pH 5.5 to 8.5.</text>
    </phDependence>
    <temperatureDependence>
        <text evidence="3">Optimum temperature is 33 degrees Celsius. Loses 50% and 100% of activity after 10 minutes of heating at 45 degrees Celsius and 50 degrees Celsius, respectively.</text>
    </temperatureDependence>
</comment>
<comment type="pathway">
    <text evidence="3">Xenobiotic degradation; nylon-6 oligomer degradation.</text>
</comment>
<comment type="subunit">
    <text evidence="3">Homodimer.</text>
</comment>
<comment type="similarity">
    <text evidence="4">Belongs to the amidase family.</text>
</comment>
<name>NYLA_PAEUR</name>
<dbReference type="EC" id="3.5.2.12"/>
<dbReference type="EMBL" id="D26094">
    <property type="protein sequence ID" value="BAA05090.1"/>
    <property type="molecule type" value="Genomic_DNA"/>
</dbReference>
<dbReference type="EMBL" id="M26953">
    <property type="protein sequence ID" value="AAA24929.1"/>
    <property type="molecule type" value="Genomic_DNA"/>
</dbReference>
<dbReference type="PDB" id="3A2P">
    <property type="method" value="X-ray"/>
    <property type="resolution" value="1.90 A"/>
    <property type="chains" value="A=1-493"/>
</dbReference>
<dbReference type="PDB" id="3A2Q">
    <property type="method" value="X-ray"/>
    <property type="resolution" value="1.80 A"/>
    <property type="chains" value="A=1-493"/>
</dbReference>
<dbReference type="PDBsum" id="3A2P"/>
<dbReference type="PDBsum" id="3A2Q"/>
<dbReference type="SMR" id="P13398"/>
<dbReference type="KEGG" id="ag:BAA05090"/>
<dbReference type="BioCyc" id="MetaCyc:MONOMER-5403"/>
<dbReference type="UniPathway" id="UPA00207"/>
<dbReference type="EvolutionaryTrace" id="P13398"/>
<dbReference type="GO" id="GO:0019874">
    <property type="term" value="F:6-aminohexanoate-cyclic-dimer hydrolase activity"/>
    <property type="evidence" value="ECO:0007669"/>
    <property type="project" value="UniProtKB-EC"/>
</dbReference>
<dbReference type="GO" id="GO:0019876">
    <property type="term" value="P:nylon catabolic process"/>
    <property type="evidence" value="ECO:0007669"/>
    <property type="project" value="UniProtKB-KW"/>
</dbReference>
<dbReference type="Gene3D" id="3.90.1300.10">
    <property type="entry name" value="Amidase signature (AS) domain"/>
    <property type="match status" value="1"/>
</dbReference>
<dbReference type="InterPro" id="IPR000120">
    <property type="entry name" value="Amidase"/>
</dbReference>
<dbReference type="InterPro" id="IPR020556">
    <property type="entry name" value="Amidase_CS"/>
</dbReference>
<dbReference type="InterPro" id="IPR023631">
    <property type="entry name" value="Amidase_dom"/>
</dbReference>
<dbReference type="InterPro" id="IPR036928">
    <property type="entry name" value="AS_sf"/>
</dbReference>
<dbReference type="PANTHER" id="PTHR11895:SF7">
    <property type="entry name" value="GLUTAMYL-TRNA(GLN) AMIDOTRANSFERASE SUBUNIT A, MITOCHONDRIAL"/>
    <property type="match status" value="1"/>
</dbReference>
<dbReference type="PANTHER" id="PTHR11895">
    <property type="entry name" value="TRANSAMIDASE"/>
    <property type="match status" value="1"/>
</dbReference>
<dbReference type="Pfam" id="PF01425">
    <property type="entry name" value="Amidase"/>
    <property type="match status" value="1"/>
</dbReference>
<dbReference type="SUPFAM" id="SSF75304">
    <property type="entry name" value="Amidase signature (AS) enzymes"/>
    <property type="match status" value="1"/>
</dbReference>
<dbReference type="PROSITE" id="PS00571">
    <property type="entry name" value="AMIDASES"/>
    <property type="match status" value="1"/>
</dbReference>
<reference key="1">
    <citation type="journal article" date="1989" name="J. Bacteriol.">
        <title>High homology between 6-aminohexanoate-cyclic-dimer hydrolases of Flavobacterium and Pseudomonas strains.</title>
        <authorList>
            <person name="Tsuchiya K."/>
            <person name="Fukuyama S."/>
            <person name="Kanzaki N."/>
            <person name="Kanagawa K."/>
            <person name="Negoro S."/>
            <person name="Okada H."/>
        </authorList>
    </citation>
    <scope>NUCLEOTIDE SEQUENCE [GENOMIC DNA]</scope>
    <scope>PROTEIN SEQUENCE OF 2-12</scope>
    <source>
        <strain>K172</strain>
    </source>
</reference>
<reference key="2">
    <citation type="journal article" date="1977" name="Eur. J. Biochem.">
        <title>6-Aminohexanoic acid cyclic dimer hydrolase. A new cyclic amide hydrolase produced by Achromobacter guttatus KI72.</title>
        <authorList>
            <person name="Kinoshita S."/>
            <person name="Negoro S."/>
            <person name="Muramatsu M."/>
            <person name="Bisaria V.S."/>
            <person name="Sawada S."/>
            <person name="Okada H."/>
        </authorList>
    </citation>
    <scope>FUNCTION</scope>
    <scope>CATALYTIC ACTIVITY</scope>
    <scope>SUBSTRATE SPECIFICITY</scope>
    <scope>BIOPHYSICOCHEMICAL PROPERTIES</scope>
    <scope>ACTIVITY REGULATION</scope>
    <scope>PATHWAY</scope>
    <scope>SUBUNIT</scope>
    <source>
        <strain>K172</strain>
    </source>
</reference>
<accession>P13398</accession>
<geneLocation type="plasmid">
    <name>pOAD2</name>
</geneLocation>
<keyword id="KW-0002">3D-structure</keyword>
<keyword id="KW-0903">Direct protein sequencing</keyword>
<keyword id="KW-0378">Hydrolase</keyword>
<keyword id="KW-0549">Nylon degradation</keyword>
<keyword id="KW-0614">Plasmid</keyword>
<proteinExistence type="evidence at protein level"/>
<gene>
    <name type="primary">nylA</name>
</gene>